<sequence>MKVTAAFAGLLVTAFAAPVPEPVLVSRSAGINYVQNYNGNLGDFTYDESAGTFSMYWEDGVSSDFVVGLGWTTGSSNAITYSAEYSASGSSSYLAVYGWVNYPQAEYYIVEDYGDYNPCSSATSLGTVYSDGSTYQVCTDTRTNEPSITGTSTFTQYFSVRESTRTSGTVTVANHFNFWAQHGFGNSDFNYQVMAVEAWSGAGSASVTISS</sequence>
<feature type="signal peptide">
    <location>
        <begin position="1"/>
        <end position="27"/>
    </location>
</feature>
<feature type="chain" id="PRO_0000007990" description="Endo-1,4-beta-xylanase A">
    <location>
        <begin position="28"/>
        <end position="211"/>
    </location>
</feature>
<feature type="domain" description="GH11" evidence="2">
    <location>
        <begin position="28"/>
        <end position="210"/>
    </location>
</feature>
<feature type="active site" description="Nucleophile" evidence="3">
    <location>
        <position position="106"/>
    </location>
</feature>
<feature type="active site" description="Proton donor" evidence="4">
    <location>
        <position position="197"/>
    </location>
</feature>
<gene>
    <name type="primary">xynA</name>
    <name type="synonym">ex1A</name>
</gene>
<organism>
    <name type="scientific">Aspergillus awamori</name>
    <name type="common">Black koji mold</name>
    <dbReference type="NCBI Taxonomy" id="105351"/>
    <lineage>
        <taxon>Eukaryota</taxon>
        <taxon>Fungi</taxon>
        <taxon>Dikarya</taxon>
        <taxon>Ascomycota</taxon>
        <taxon>Pezizomycotina</taxon>
        <taxon>Eurotiomycetes</taxon>
        <taxon>Eurotiomycetidae</taxon>
        <taxon>Eurotiales</taxon>
        <taxon>Aspergillaceae</taxon>
        <taxon>Aspergillus</taxon>
    </lineage>
</organism>
<protein>
    <recommendedName>
        <fullName>Endo-1,4-beta-xylanase A</fullName>
        <shortName>Xylanase A</shortName>
        <ecNumber>3.2.1.8</ecNumber>
    </recommendedName>
    <alternativeName>
        <fullName>1,4-beta-D-xylan xylanohydrolase A</fullName>
    </alternativeName>
    <alternativeName>
        <fullName>Endo-1,4-beta-xylanase I</fullName>
        <shortName>Xylanase I</shortName>
    </alternativeName>
</protein>
<reference key="1">
    <citation type="journal article" date="1994" name="Curr. Genet.">
        <title>Isolation and characterization of a 1,4-beta-endoxylanase gene of A. awamori.</title>
        <authorList>
            <person name="Hessing J.G.M."/>
            <person name="van Rotterdam C.O."/>
            <person name="Verbakel J.M.A."/>
            <person name="Roza M."/>
            <person name="Maat J."/>
            <person name="van Gorcom R.F.M."/>
            <person name="van den Hondel C.A.M.J.J."/>
        </authorList>
    </citation>
    <scope>NUCLEOTIDE SEQUENCE [GENOMIC DNA]</scope>
    <scope>PARTIAL PROTEIN SEQUENCE</scope>
    <source>
        <strain>ATCC 11358 / K-6615 / CBS 115.52</strain>
    </source>
</reference>
<comment type="function">
    <text>Endo-1,4-beta-xylanase involved in the hydrolysis of xylan, a major structural heterogeneous polysaccharide found in plant biomass representing the second most abundant polysaccharide in the biosphere, after cellulose.</text>
</comment>
<comment type="catalytic activity">
    <reaction>
        <text>Endohydrolysis of (1-&gt;4)-beta-D-xylosidic linkages in xylans.</text>
        <dbReference type="EC" id="3.2.1.8"/>
    </reaction>
</comment>
<comment type="pathway">
    <text>Glycan degradation; xylan degradation.</text>
</comment>
<comment type="subcellular location">
    <subcellularLocation>
        <location evidence="1">Secreted</location>
    </subcellularLocation>
</comment>
<comment type="similarity">
    <text evidence="5">Belongs to the glycosyl hydrolase 11 (cellulase G) family.</text>
</comment>
<proteinExistence type="evidence at protein level"/>
<name>XYNA_ASPAW</name>
<dbReference type="EC" id="3.2.1.8"/>
<dbReference type="EMBL" id="X78115">
    <property type="protein sequence ID" value="CAA55005.1"/>
    <property type="molecule type" value="Genomic_DNA"/>
</dbReference>
<dbReference type="PIR" id="S48229">
    <property type="entry name" value="S48229"/>
</dbReference>
<dbReference type="SMR" id="P55328"/>
<dbReference type="CAZy" id="GH11">
    <property type="family name" value="Glycoside Hydrolase Family 11"/>
</dbReference>
<dbReference type="UniPathway" id="UPA00114"/>
<dbReference type="GO" id="GO:0005576">
    <property type="term" value="C:extracellular region"/>
    <property type="evidence" value="ECO:0007669"/>
    <property type="project" value="UniProtKB-SubCell"/>
</dbReference>
<dbReference type="GO" id="GO:0031176">
    <property type="term" value="F:endo-1,4-beta-xylanase activity"/>
    <property type="evidence" value="ECO:0007669"/>
    <property type="project" value="UniProtKB-EC"/>
</dbReference>
<dbReference type="GO" id="GO:0045493">
    <property type="term" value="P:xylan catabolic process"/>
    <property type="evidence" value="ECO:0007669"/>
    <property type="project" value="UniProtKB-UniPathway"/>
</dbReference>
<dbReference type="FunFam" id="2.60.120.180:FF:000002">
    <property type="entry name" value="Endo-1,4-beta-xylanase A"/>
    <property type="match status" value="1"/>
</dbReference>
<dbReference type="Gene3D" id="2.60.120.180">
    <property type="match status" value="1"/>
</dbReference>
<dbReference type="InterPro" id="IPR013320">
    <property type="entry name" value="ConA-like_dom_sf"/>
</dbReference>
<dbReference type="InterPro" id="IPR013319">
    <property type="entry name" value="GH11/12"/>
</dbReference>
<dbReference type="InterPro" id="IPR018208">
    <property type="entry name" value="GH11_AS_1"/>
</dbReference>
<dbReference type="InterPro" id="IPR033119">
    <property type="entry name" value="GH11_AS_2"/>
</dbReference>
<dbReference type="InterPro" id="IPR033123">
    <property type="entry name" value="GH11_dom"/>
</dbReference>
<dbReference type="InterPro" id="IPR001137">
    <property type="entry name" value="Glyco_hydro_11"/>
</dbReference>
<dbReference type="PANTHER" id="PTHR46828">
    <property type="entry name" value="ENDO-1,4-BETA-XYLANASE A-RELATED"/>
    <property type="match status" value="1"/>
</dbReference>
<dbReference type="PANTHER" id="PTHR46828:SF2">
    <property type="entry name" value="ENDO-1,4-BETA-XYLANASE A-RELATED"/>
    <property type="match status" value="1"/>
</dbReference>
<dbReference type="Pfam" id="PF00457">
    <property type="entry name" value="Glyco_hydro_11"/>
    <property type="match status" value="1"/>
</dbReference>
<dbReference type="PRINTS" id="PR00911">
    <property type="entry name" value="GLHYDRLASE11"/>
</dbReference>
<dbReference type="SUPFAM" id="SSF49899">
    <property type="entry name" value="Concanavalin A-like lectins/glucanases"/>
    <property type="match status" value="1"/>
</dbReference>
<dbReference type="PROSITE" id="PS00776">
    <property type="entry name" value="GH11_1"/>
    <property type="match status" value="1"/>
</dbReference>
<dbReference type="PROSITE" id="PS00777">
    <property type="entry name" value="GH11_2"/>
    <property type="match status" value="1"/>
</dbReference>
<dbReference type="PROSITE" id="PS51761">
    <property type="entry name" value="GH11_3"/>
    <property type="match status" value="1"/>
</dbReference>
<keyword id="KW-0119">Carbohydrate metabolism</keyword>
<keyword id="KW-0903">Direct protein sequencing</keyword>
<keyword id="KW-0326">Glycosidase</keyword>
<keyword id="KW-0378">Hydrolase</keyword>
<keyword id="KW-0624">Polysaccharide degradation</keyword>
<keyword id="KW-0964">Secreted</keyword>
<keyword id="KW-0732">Signal</keyword>
<keyword id="KW-0858">Xylan degradation</keyword>
<accession>P55328</accession>
<accession>Q12534</accession>
<evidence type="ECO:0000250" key="1"/>
<evidence type="ECO:0000255" key="2">
    <source>
        <dbReference type="PROSITE-ProRule" id="PRU01097"/>
    </source>
</evidence>
<evidence type="ECO:0000255" key="3">
    <source>
        <dbReference type="PROSITE-ProRule" id="PRU10062"/>
    </source>
</evidence>
<evidence type="ECO:0000255" key="4">
    <source>
        <dbReference type="PROSITE-ProRule" id="PRU10063"/>
    </source>
</evidence>
<evidence type="ECO:0000305" key="5"/>